<proteinExistence type="inferred from homology"/>
<accession>A9N0L8</accession>
<keyword id="KW-0378">Hydrolase</keyword>
<keyword id="KW-0511">Multifunctional enzyme</keyword>
<keyword id="KW-0658">Purine biosynthesis</keyword>
<keyword id="KW-0808">Transferase</keyword>
<organism>
    <name type="scientific">Salmonella paratyphi B (strain ATCC BAA-1250 / SPB7)</name>
    <dbReference type="NCBI Taxonomy" id="1016998"/>
    <lineage>
        <taxon>Bacteria</taxon>
        <taxon>Pseudomonadati</taxon>
        <taxon>Pseudomonadota</taxon>
        <taxon>Gammaproteobacteria</taxon>
        <taxon>Enterobacterales</taxon>
        <taxon>Enterobacteriaceae</taxon>
        <taxon>Salmonella</taxon>
    </lineage>
</organism>
<sequence>MQQRRPVRRALLSVSDKAGIIEFAQALSARGVELLSTGGTARLLAEKGLPVTEVSDYTGFPEMMDGRVKTLHPKVHGGILGRRGQDDAIMEQHHIAPIDMVVVNLYPFAETVAREGCSLEDAVENIDIGGPTMVRSAAKNHKDVAIVVKSSDYDAIIKEMDANEGSLTLDTRFDLAIKAFEHTAAYDSMIANYFGSMVPAYHGESKEAAGRFPRTLNLNFIKKQDMRYGENSHQQAAFYIEENVKEASVATAQQVQGKALSYNNIADTDAALECVKEFNEPACVIVKHANPCGVAVSTSILDAYDRAYKTDPTSAFGGIIAFNRELDAETAQAIISRQFVEVIIAPSASEEALKITAAKQNVRVLTCGQWGERVPGLDFKRVNGGLLVQDRDLGMVSEAELRVVSKRQPTEQELRDALFCWKVAKFVKSNAIVYAKENMTIGIGAGQMSRVYSAKIAGIKAADEGLEVKGSAMASDAFFPFRDGIDAAAAVGVSCVIQPGGSIRDDEVIAAADEHGIAMIFTDMRHFRH</sequence>
<dbReference type="EC" id="2.1.2.3" evidence="1"/>
<dbReference type="EC" id="3.5.4.10" evidence="1"/>
<dbReference type="EMBL" id="CP000886">
    <property type="protein sequence ID" value="ABX70447.1"/>
    <property type="molecule type" value="Genomic_DNA"/>
</dbReference>
<dbReference type="RefSeq" id="WP_001187507.1">
    <property type="nucleotide sequence ID" value="NC_010102.1"/>
</dbReference>
<dbReference type="SMR" id="A9N0L8"/>
<dbReference type="KEGG" id="spq:SPAB_05166"/>
<dbReference type="PATRIC" id="fig|1016998.12.peg.4840"/>
<dbReference type="HOGENOM" id="CLU_016316_5_2_6"/>
<dbReference type="BioCyc" id="SENT1016998:SPAB_RS21035-MONOMER"/>
<dbReference type="UniPathway" id="UPA00074">
    <property type="reaction ID" value="UER00133"/>
</dbReference>
<dbReference type="UniPathway" id="UPA00074">
    <property type="reaction ID" value="UER00135"/>
</dbReference>
<dbReference type="Proteomes" id="UP000008556">
    <property type="component" value="Chromosome"/>
</dbReference>
<dbReference type="GO" id="GO:0005829">
    <property type="term" value="C:cytosol"/>
    <property type="evidence" value="ECO:0007669"/>
    <property type="project" value="TreeGrafter"/>
</dbReference>
<dbReference type="GO" id="GO:0003937">
    <property type="term" value="F:IMP cyclohydrolase activity"/>
    <property type="evidence" value="ECO:0007669"/>
    <property type="project" value="UniProtKB-UniRule"/>
</dbReference>
<dbReference type="GO" id="GO:0004643">
    <property type="term" value="F:phosphoribosylaminoimidazolecarboxamide formyltransferase activity"/>
    <property type="evidence" value="ECO:0007669"/>
    <property type="project" value="UniProtKB-UniRule"/>
</dbReference>
<dbReference type="GO" id="GO:0006189">
    <property type="term" value="P:'de novo' IMP biosynthetic process"/>
    <property type="evidence" value="ECO:0007669"/>
    <property type="project" value="UniProtKB-UniRule"/>
</dbReference>
<dbReference type="CDD" id="cd01421">
    <property type="entry name" value="IMPCH"/>
    <property type="match status" value="1"/>
</dbReference>
<dbReference type="FunFam" id="3.40.140.20:FF:000001">
    <property type="entry name" value="Bifunctional purine biosynthesis protein PurH"/>
    <property type="match status" value="1"/>
</dbReference>
<dbReference type="FunFam" id="3.40.140.20:FF:000002">
    <property type="entry name" value="Bifunctional purine biosynthesis protein PurH"/>
    <property type="match status" value="1"/>
</dbReference>
<dbReference type="FunFam" id="3.40.50.1380:FF:000001">
    <property type="entry name" value="Bifunctional purine biosynthesis protein PurH"/>
    <property type="match status" value="1"/>
</dbReference>
<dbReference type="Gene3D" id="3.40.140.20">
    <property type="match status" value="2"/>
</dbReference>
<dbReference type="Gene3D" id="3.40.50.1380">
    <property type="entry name" value="Methylglyoxal synthase-like domain"/>
    <property type="match status" value="1"/>
</dbReference>
<dbReference type="HAMAP" id="MF_00139">
    <property type="entry name" value="PurH"/>
    <property type="match status" value="1"/>
</dbReference>
<dbReference type="InterPro" id="IPR024051">
    <property type="entry name" value="AICAR_Tfase_dup_dom_sf"/>
</dbReference>
<dbReference type="InterPro" id="IPR016193">
    <property type="entry name" value="Cytidine_deaminase-like"/>
</dbReference>
<dbReference type="InterPro" id="IPR011607">
    <property type="entry name" value="MGS-like_dom"/>
</dbReference>
<dbReference type="InterPro" id="IPR036914">
    <property type="entry name" value="MGS-like_dom_sf"/>
</dbReference>
<dbReference type="InterPro" id="IPR002695">
    <property type="entry name" value="PurH-like"/>
</dbReference>
<dbReference type="NCBIfam" id="NF002049">
    <property type="entry name" value="PRK00881.1"/>
    <property type="match status" value="1"/>
</dbReference>
<dbReference type="NCBIfam" id="TIGR00355">
    <property type="entry name" value="purH"/>
    <property type="match status" value="1"/>
</dbReference>
<dbReference type="PANTHER" id="PTHR11692:SF0">
    <property type="entry name" value="BIFUNCTIONAL PURINE BIOSYNTHESIS PROTEIN ATIC"/>
    <property type="match status" value="1"/>
</dbReference>
<dbReference type="PANTHER" id="PTHR11692">
    <property type="entry name" value="BIFUNCTIONAL PURINE BIOSYNTHESIS PROTEIN PURH"/>
    <property type="match status" value="1"/>
</dbReference>
<dbReference type="Pfam" id="PF01808">
    <property type="entry name" value="AICARFT_IMPCHas"/>
    <property type="match status" value="1"/>
</dbReference>
<dbReference type="Pfam" id="PF02142">
    <property type="entry name" value="MGS"/>
    <property type="match status" value="1"/>
</dbReference>
<dbReference type="PIRSF" id="PIRSF000414">
    <property type="entry name" value="AICARFT_IMPCHas"/>
    <property type="match status" value="1"/>
</dbReference>
<dbReference type="SMART" id="SM00798">
    <property type="entry name" value="AICARFT_IMPCHas"/>
    <property type="match status" value="1"/>
</dbReference>
<dbReference type="SMART" id="SM00851">
    <property type="entry name" value="MGS"/>
    <property type="match status" value="1"/>
</dbReference>
<dbReference type="SUPFAM" id="SSF53927">
    <property type="entry name" value="Cytidine deaminase-like"/>
    <property type="match status" value="1"/>
</dbReference>
<dbReference type="SUPFAM" id="SSF52335">
    <property type="entry name" value="Methylglyoxal synthase-like"/>
    <property type="match status" value="1"/>
</dbReference>
<dbReference type="PROSITE" id="PS51855">
    <property type="entry name" value="MGS"/>
    <property type="match status" value="1"/>
</dbReference>
<comment type="catalytic activity">
    <reaction evidence="1">
        <text>(6R)-10-formyltetrahydrofolate + 5-amino-1-(5-phospho-beta-D-ribosyl)imidazole-4-carboxamide = 5-formamido-1-(5-phospho-D-ribosyl)imidazole-4-carboxamide + (6S)-5,6,7,8-tetrahydrofolate</text>
        <dbReference type="Rhea" id="RHEA:22192"/>
        <dbReference type="ChEBI" id="CHEBI:57453"/>
        <dbReference type="ChEBI" id="CHEBI:58467"/>
        <dbReference type="ChEBI" id="CHEBI:58475"/>
        <dbReference type="ChEBI" id="CHEBI:195366"/>
        <dbReference type="EC" id="2.1.2.3"/>
    </reaction>
</comment>
<comment type="catalytic activity">
    <reaction evidence="1">
        <text>IMP + H2O = 5-formamido-1-(5-phospho-D-ribosyl)imidazole-4-carboxamide</text>
        <dbReference type="Rhea" id="RHEA:18445"/>
        <dbReference type="ChEBI" id="CHEBI:15377"/>
        <dbReference type="ChEBI" id="CHEBI:58053"/>
        <dbReference type="ChEBI" id="CHEBI:58467"/>
        <dbReference type="EC" id="3.5.4.10"/>
    </reaction>
</comment>
<comment type="pathway">
    <text evidence="1">Purine metabolism; IMP biosynthesis via de novo pathway; 5-formamido-1-(5-phospho-D-ribosyl)imidazole-4-carboxamide from 5-amino-1-(5-phospho-D-ribosyl)imidazole-4-carboxamide (10-formyl THF route): step 1/1.</text>
</comment>
<comment type="pathway">
    <text evidence="1">Purine metabolism; IMP biosynthesis via de novo pathway; IMP from 5-formamido-1-(5-phospho-D-ribosyl)imidazole-4-carboxamide: step 1/1.</text>
</comment>
<comment type="domain">
    <text evidence="1">The IMP cyclohydrolase activity resides in the N-terminal region.</text>
</comment>
<comment type="similarity">
    <text evidence="1">Belongs to the PurH family.</text>
</comment>
<reference key="1">
    <citation type="submission" date="2007-11" db="EMBL/GenBank/DDBJ databases">
        <authorList>
            <consortium name="The Salmonella enterica serovar Paratyphi B Genome Sequencing Project"/>
            <person name="McClelland M."/>
            <person name="Sanderson E.K."/>
            <person name="Porwollik S."/>
            <person name="Spieth J."/>
            <person name="Clifton W.S."/>
            <person name="Fulton R."/>
            <person name="Cordes M."/>
            <person name="Wollam A."/>
            <person name="Shah N."/>
            <person name="Pepin K."/>
            <person name="Bhonagiri V."/>
            <person name="Nash W."/>
            <person name="Johnson M."/>
            <person name="Thiruvilangam P."/>
            <person name="Wilson R."/>
        </authorList>
    </citation>
    <scope>NUCLEOTIDE SEQUENCE [LARGE SCALE GENOMIC DNA]</scope>
    <source>
        <strain>ATCC BAA-1250 / SPB7</strain>
    </source>
</reference>
<protein>
    <recommendedName>
        <fullName evidence="1">Bifunctional purine biosynthesis protein PurH</fullName>
    </recommendedName>
    <domain>
        <recommendedName>
            <fullName evidence="1">Phosphoribosylaminoimidazolecarboxamide formyltransferase</fullName>
            <ecNumber evidence="1">2.1.2.3</ecNumber>
        </recommendedName>
        <alternativeName>
            <fullName evidence="1">AICAR transformylase</fullName>
        </alternativeName>
    </domain>
    <domain>
        <recommendedName>
            <fullName evidence="1">IMP cyclohydrolase</fullName>
            <ecNumber evidence="1">3.5.4.10</ecNumber>
        </recommendedName>
        <alternativeName>
            <fullName evidence="1">ATIC</fullName>
        </alternativeName>
        <alternativeName>
            <fullName evidence="1">IMP synthase</fullName>
        </alternativeName>
        <alternativeName>
            <fullName evidence="1">Inosinicase</fullName>
        </alternativeName>
    </domain>
</protein>
<gene>
    <name evidence="1" type="primary">purH</name>
    <name type="ordered locus">SPAB_05166</name>
</gene>
<name>PUR9_SALPB</name>
<feature type="chain" id="PRO_1000076492" description="Bifunctional purine biosynthesis protein PurH">
    <location>
        <begin position="1"/>
        <end position="529"/>
    </location>
</feature>
<feature type="domain" description="MGS-like" evidence="2">
    <location>
        <begin position="1"/>
        <end position="148"/>
    </location>
</feature>
<evidence type="ECO:0000255" key="1">
    <source>
        <dbReference type="HAMAP-Rule" id="MF_00139"/>
    </source>
</evidence>
<evidence type="ECO:0000255" key="2">
    <source>
        <dbReference type="PROSITE-ProRule" id="PRU01202"/>
    </source>
</evidence>